<keyword id="KW-0027">Amidation</keyword>
<keyword id="KW-0119">Carbohydrate metabolism</keyword>
<keyword id="KW-0165">Cleavage on pair of basic residues</keyword>
<keyword id="KW-1015">Disulfide bond</keyword>
<keyword id="KW-0301">Gamma-carboxyglutamic acid</keyword>
<keyword id="KW-0313">Glucose metabolism</keyword>
<keyword id="KW-0372">Hormone</keyword>
<keyword id="KW-0379">Hydroxylation</keyword>
<keyword id="KW-0964">Secreted</keyword>
<keyword id="KW-0732">Signal</keyword>
<keyword id="KW-0800">Toxin</keyword>
<name>INS2_CONTU</name>
<reference key="1">
    <citation type="journal article" date="2019" name="Elife">
        <title>Fish-hunting cone snail venoms are a rich source of minimized ligands of the vertebrate insulin receptor.</title>
        <authorList>
            <person name="Ahorukomeye P."/>
            <person name="Disotuar M.M."/>
            <person name="Gajewiak J."/>
            <person name="Karanth S."/>
            <person name="Watkins M."/>
            <person name="Robinson S.D."/>
            <person name="Florez Salcedo P."/>
            <person name="Smith N.A."/>
            <person name="Smith B.J."/>
            <person name="Schlegel A."/>
            <person name="Forbes B.E."/>
            <person name="Olivera B."/>
            <person name="Hung-Chieh Chou D."/>
            <person name="Safavi-Hemami H."/>
        </authorList>
    </citation>
    <scope>NUCLEOTIDE SEQUENCE [MRNA]</scope>
    <scope>FUNCTION</scope>
    <scope>SYNTHESIS OF 30-52 AND 95-114</scope>
</reference>
<evidence type="ECO:0000250" key="1">
    <source>
        <dbReference type="UniProtKB" id="A0A0B5AC90"/>
    </source>
</evidence>
<evidence type="ECO:0000250" key="2">
    <source>
        <dbReference type="UniProtKB" id="A0A0B5AC95"/>
    </source>
</evidence>
<evidence type="ECO:0000255" key="3"/>
<evidence type="ECO:0000269" key="4">
    <source>
    </source>
</evidence>
<evidence type="ECO:0000303" key="5">
    <source>
    </source>
</evidence>
<evidence type="ECO:0000305" key="6"/>
<protein>
    <recommendedName>
        <fullName evidence="5">Con-Ins T2</fullName>
    </recommendedName>
    <alternativeName>
        <fullName evidence="5">Insulin T2</fullName>
    </alternativeName>
    <component>
        <recommendedName>
            <fullName evidence="5">Con-Ins T2 B chain</fullName>
        </recommendedName>
    </component>
    <component>
        <recommendedName>
            <fullName evidence="5">Con-Ins T2 A chain</fullName>
        </recommendedName>
    </component>
</protein>
<dbReference type="EMBL" id="MH879035">
    <property type="protein sequence ID" value="AZS18885.1"/>
    <property type="molecule type" value="mRNA"/>
</dbReference>
<dbReference type="GO" id="GO:0005576">
    <property type="term" value="C:extracellular region"/>
    <property type="evidence" value="ECO:0007669"/>
    <property type="project" value="UniProtKB-SubCell"/>
</dbReference>
<dbReference type="GO" id="GO:0005179">
    <property type="term" value="F:hormone activity"/>
    <property type="evidence" value="ECO:0007669"/>
    <property type="project" value="UniProtKB-KW"/>
</dbReference>
<dbReference type="GO" id="GO:0090729">
    <property type="term" value="F:toxin activity"/>
    <property type="evidence" value="ECO:0007669"/>
    <property type="project" value="UniProtKB-KW"/>
</dbReference>
<dbReference type="GO" id="GO:0006006">
    <property type="term" value="P:glucose metabolic process"/>
    <property type="evidence" value="ECO:0007669"/>
    <property type="project" value="UniProtKB-KW"/>
</dbReference>
<dbReference type="Gene3D" id="1.10.100.10">
    <property type="entry name" value="Insulin-like"/>
    <property type="match status" value="1"/>
</dbReference>
<dbReference type="InterPro" id="IPR016179">
    <property type="entry name" value="Insulin-like"/>
</dbReference>
<dbReference type="InterPro" id="IPR036438">
    <property type="entry name" value="Insulin-like_sf"/>
</dbReference>
<dbReference type="InterPro" id="IPR022353">
    <property type="entry name" value="Insulin_CS"/>
</dbReference>
<dbReference type="Pfam" id="PF00049">
    <property type="entry name" value="Insulin"/>
    <property type="match status" value="1"/>
</dbReference>
<dbReference type="SMART" id="SM00078">
    <property type="entry name" value="IlGF"/>
    <property type="match status" value="1"/>
</dbReference>
<dbReference type="SUPFAM" id="SSF56994">
    <property type="entry name" value="Insulin-like"/>
    <property type="match status" value="1"/>
</dbReference>
<dbReference type="PROSITE" id="PS00262">
    <property type="entry name" value="INSULIN"/>
    <property type="match status" value="1"/>
</dbReference>
<comment type="function">
    <text evidence="2 4">This venom insulin facilitates prey capture by rapidly inducing hypoglycemic shock (PubMed:30747102). It is one of the smallest known insulin found in nature and lacks the C-terminal segment of the B chain that, in human insulin, mediates engagement of the insulin receptor (INSR) and assembly of the hormone's hexameric storage form (By similarity). Despite lacking this segment, it both binds and activates human insulin receptor (long isoform (HIR-B)) with a high potency (EC(50)=15.5 nM) (PubMed:30747102). In vivo, intraperitoneal injection of this peptide into zebrafish lowers blood glucose with a lower potency than human insulin (PubMed:30747102). In addition, when applied to water, this peptide reduces overall locomotor activity of zebrafish larvae, observed as a significant decrease in the percentage of time spent swimming and movement frequency (By similarity). When tested on a mouse model of diabetes, this insulin also lowers blood glucose with a 10-fold lower potency than human insulin (By similarity).</text>
</comment>
<comment type="subunit">
    <text evidence="2">Heterodimer of A and B chains; disulfide-linked.</text>
</comment>
<comment type="subcellular location">
    <subcellularLocation>
        <location evidence="2">Secreted</location>
    </subcellularLocation>
</comment>
<comment type="tissue specificity">
    <text evidence="1">Expressed by the venom gland.</text>
</comment>
<comment type="similarity">
    <text>Belongs to the insulin family.</text>
</comment>
<sequence length="115" mass="13070">MTTSFYFLLVALGLLLYVCQSSFGNQHTRNSDTPWNRCGSQITDSYRELCPHKRNDAGKKRGQASPLWQRGGSLSMLKARAKRNEAFHLQRAHRGVVEHCCKRACSNAEFMQFCG</sequence>
<organism>
    <name type="scientific">Conus tulipa</name>
    <name type="common">Fish-hunting cone snail</name>
    <name type="synonym">Tulip cone</name>
    <dbReference type="NCBI Taxonomy" id="6495"/>
    <lineage>
        <taxon>Eukaryota</taxon>
        <taxon>Metazoa</taxon>
        <taxon>Spiralia</taxon>
        <taxon>Lophotrochozoa</taxon>
        <taxon>Mollusca</taxon>
        <taxon>Gastropoda</taxon>
        <taxon>Caenogastropoda</taxon>
        <taxon>Neogastropoda</taxon>
        <taxon>Conoidea</taxon>
        <taxon>Conidae</taxon>
        <taxon>Conus</taxon>
        <taxon>Gastridium</taxon>
    </lineage>
</organism>
<feature type="signal peptide" evidence="3">
    <location>
        <begin position="1"/>
        <end position="21"/>
    </location>
</feature>
<feature type="propeptide" id="PRO_0000452028" evidence="2">
    <location>
        <begin position="22"/>
        <end position="29"/>
    </location>
</feature>
<feature type="peptide" id="PRO_5019019994" description="Con-Ins T2 B chain">
    <location>
        <begin position="30"/>
        <end position="52"/>
    </location>
</feature>
<feature type="propeptide" id="PRO_0000452029" description="C peptide" evidence="2">
    <location>
        <begin position="53"/>
        <end position="94"/>
    </location>
</feature>
<feature type="peptide" id="PRO_0000452030" description="Con-Ins T2 A chain" evidence="2">
    <location>
        <begin position="95"/>
        <end position="114"/>
    </location>
</feature>
<feature type="modified residue" description="4-carboxyglutamate" evidence="6">
    <location>
        <position position="48"/>
    </location>
</feature>
<feature type="modified residue" description="4-carboxyglutamate" evidence="2">
    <location>
        <position position="98"/>
    </location>
</feature>
<feature type="modified residue" description="4-carboxyglutamate" evidence="2">
    <location>
        <position position="109"/>
    </location>
</feature>
<feature type="modified residue" description="Cysteine amide" evidence="2">
    <location>
        <position position="114"/>
    </location>
</feature>
<feature type="disulfide bond" description="Interchain (between B and A chains)" evidence="2">
    <location>
        <begin position="38"/>
        <end position="101"/>
    </location>
</feature>
<feature type="disulfide bond" description="Interchain (between B and A chains)" evidence="2">
    <location>
        <begin position="50"/>
        <end position="114"/>
    </location>
</feature>
<feature type="disulfide bond" evidence="2">
    <location>
        <begin position="100"/>
        <end position="105"/>
    </location>
</feature>
<proteinExistence type="inferred from homology"/>
<accession>A0A3S9V8L9</accession>